<feature type="chain" id="PRO_0000444498" description="Methanethiol S-methyltransferase">
    <location>
        <begin position="1"/>
        <end position="244"/>
    </location>
</feature>
<feature type="transmembrane region" description="Helical" evidence="1">
    <location>
        <begin position="7"/>
        <end position="27"/>
    </location>
</feature>
<feature type="transmembrane region" description="Helical" evidence="1">
    <location>
        <begin position="41"/>
        <end position="61"/>
    </location>
</feature>
<feature type="transmembrane region" description="Helical" evidence="1">
    <location>
        <begin position="90"/>
        <end position="110"/>
    </location>
</feature>
<feature type="transmembrane region" description="Helical" evidence="1">
    <location>
        <begin position="120"/>
        <end position="140"/>
    </location>
</feature>
<feature type="transmembrane region" description="Helical" evidence="1">
    <location>
        <begin position="181"/>
        <end position="201"/>
    </location>
</feature>
<evidence type="ECO:0000255" key="1"/>
<evidence type="ECO:0000269" key="2">
    <source>
    </source>
</evidence>
<evidence type="ECO:0000303" key="3">
    <source>
    </source>
</evidence>
<evidence type="ECO:0000305" key="4"/>
<evidence type="ECO:0000312" key="5">
    <source>
        <dbReference type="EMBL" id="CCP46057.1"/>
    </source>
</evidence>
<evidence type="ECO:0000312" key="6">
    <source>
        <dbReference type="Proteomes" id="UP000001584"/>
    </source>
</evidence>
<gene>
    <name evidence="3" type="primary">mddA</name>
    <name evidence="5" type="ordered locus">Rv3238c</name>
</gene>
<name>MDDA_MYCTU</name>
<keyword id="KW-0472">Membrane</keyword>
<keyword id="KW-0489">Methyltransferase</keyword>
<keyword id="KW-1185">Reference proteome</keyword>
<keyword id="KW-0949">S-adenosyl-L-methionine</keyword>
<keyword id="KW-0808">Transferase</keyword>
<keyword id="KW-0812">Transmembrane</keyword>
<keyword id="KW-1133">Transmembrane helix</keyword>
<protein>
    <recommendedName>
        <fullName evidence="3">Methanethiol S-methyltransferase</fullName>
        <ecNumber evidence="2">2.1.1.334</ecNumber>
    </recommendedName>
</protein>
<sequence>MKRYLTIIYGAASYLVFLVAFGYAIGFVGDVVVPRTVDHAIAAPIGQAVVVNLVLLGVFAVQHSVMARQGFKRWWTRFVPPSIERSTYVLLASVALLLLYWQWRTMPAVIWDVRQPAGRVALWALFWLGWATVLTSTFMINHFELFGLRQVYLAWRGKPYTEIGFQAHLLYRWVRHPIMLGFVVAFWATPMMTAGHLLFAIGATGYILVALQFEERDLLAALGDQYRDYRREVSMLLPWPHRHT</sequence>
<proteinExistence type="evidence at protein level"/>
<dbReference type="EC" id="2.1.1.334" evidence="2"/>
<dbReference type="EMBL" id="AL123456">
    <property type="protein sequence ID" value="CCP46057.1"/>
    <property type="molecule type" value="Genomic_DNA"/>
</dbReference>
<dbReference type="RefSeq" id="NP_217755.1">
    <property type="nucleotide sequence ID" value="NC_000962.3"/>
</dbReference>
<dbReference type="RefSeq" id="WP_003416945.1">
    <property type="nucleotide sequence ID" value="NZ_NVQJ01000003.1"/>
</dbReference>
<dbReference type="SMR" id="O05883"/>
<dbReference type="FunCoup" id="O05883">
    <property type="interactions" value="60"/>
</dbReference>
<dbReference type="STRING" id="83332.Rv3238c"/>
<dbReference type="PaxDb" id="83332-Rv3238c"/>
<dbReference type="DNASU" id="888858"/>
<dbReference type="GeneID" id="888858"/>
<dbReference type="KEGG" id="mtu:Rv3238c"/>
<dbReference type="KEGG" id="mtv:RVBD_3238c"/>
<dbReference type="PATRIC" id="fig|83332.111.peg.3616"/>
<dbReference type="TubercuList" id="Rv3238c"/>
<dbReference type="eggNOG" id="COG2020">
    <property type="taxonomic scope" value="Bacteria"/>
</dbReference>
<dbReference type="InParanoid" id="O05883"/>
<dbReference type="OrthoDB" id="9789029at2"/>
<dbReference type="PhylomeDB" id="O05883"/>
<dbReference type="BRENDA" id="2.1.1.334">
    <property type="organism ID" value="3445"/>
</dbReference>
<dbReference type="Proteomes" id="UP000001584">
    <property type="component" value="Chromosome"/>
</dbReference>
<dbReference type="GO" id="GO:0016020">
    <property type="term" value="C:membrane"/>
    <property type="evidence" value="ECO:0007669"/>
    <property type="project" value="UniProtKB-SubCell"/>
</dbReference>
<dbReference type="GO" id="GO:0008168">
    <property type="term" value="F:methyltransferase activity"/>
    <property type="evidence" value="ECO:0007669"/>
    <property type="project" value="UniProtKB-KW"/>
</dbReference>
<dbReference type="GO" id="GO:0032259">
    <property type="term" value="P:methylation"/>
    <property type="evidence" value="ECO:0007669"/>
    <property type="project" value="UniProtKB-KW"/>
</dbReference>
<dbReference type="Gene3D" id="1.20.120.1630">
    <property type="match status" value="1"/>
</dbReference>
<dbReference type="InterPro" id="IPR054700">
    <property type="entry name" value="MddA"/>
</dbReference>
<dbReference type="InterPro" id="IPR033580">
    <property type="entry name" value="Nurim-like"/>
</dbReference>
<dbReference type="NCBIfam" id="NF045656">
    <property type="entry name" value="MeththiolMtaseMddA"/>
    <property type="match status" value="1"/>
</dbReference>
<dbReference type="PANTHER" id="PTHR31040">
    <property type="entry name" value="NURIM"/>
    <property type="match status" value="1"/>
</dbReference>
<dbReference type="PANTHER" id="PTHR31040:SF1">
    <property type="entry name" value="NURIM"/>
    <property type="match status" value="1"/>
</dbReference>
<comment type="function">
    <text evidence="2">Catalyzes the methylation of methanethiol (MeSH) to yield dimethylsulphide (DMS).</text>
</comment>
<comment type="catalytic activity">
    <reaction evidence="2">
        <text>methanethiol + S-adenosyl-L-methionine = dimethyl sulfide + S-adenosyl-L-homocysteine + H(+)</text>
        <dbReference type="Rhea" id="RHEA:50428"/>
        <dbReference type="ChEBI" id="CHEBI:15378"/>
        <dbReference type="ChEBI" id="CHEBI:16007"/>
        <dbReference type="ChEBI" id="CHEBI:17437"/>
        <dbReference type="ChEBI" id="CHEBI:57856"/>
        <dbReference type="ChEBI" id="CHEBI:59789"/>
        <dbReference type="EC" id="2.1.1.334"/>
    </reaction>
</comment>
<comment type="subcellular location">
    <subcellularLocation>
        <location evidence="1">Membrane</location>
        <topology evidence="1">Multi-pass membrane protein</topology>
    </subcellularLocation>
</comment>
<comment type="similarity">
    <text evidence="4">Belongs to the nurim family.</text>
</comment>
<organism>
    <name type="scientific">Mycobacterium tuberculosis (strain ATCC 25618 / H37Rv)</name>
    <dbReference type="NCBI Taxonomy" id="83332"/>
    <lineage>
        <taxon>Bacteria</taxon>
        <taxon>Bacillati</taxon>
        <taxon>Actinomycetota</taxon>
        <taxon>Actinomycetes</taxon>
        <taxon>Mycobacteriales</taxon>
        <taxon>Mycobacteriaceae</taxon>
        <taxon>Mycobacterium</taxon>
        <taxon>Mycobacterium tuberculosis complex</taxon>
    </lineage>
</organism>
<accession>O05883</accession>
<accession>F2GKB4</accession>
<accession>I6Y304</accession>
<accession>Q7D5V3</accession>
<reference key="1">
    <citation type="journal article" date="1998" name="Nature">
        <title>Deciphering the biology of Mycobacterium tuberculosis from the complete genome sequence.</title>
        <authorList>
            <person name="Cole S.T."/>
            <person name="Brosch R."/>
            <person name="Parkhill J."/>
            <person name="Garnier T."/>
            <person name="Churcher C.M."/>
            <person name="Harris D.E."/>
            <person name="Gordon S.V."/>
            <person name="Eiglmeier K."/>
            <person name="Gas S."/>
            <person name="Barry C.E. III"/>
            <person name="Tekaia F."/>
            <person name="Badcock K."/>
            <person name="Basham D."/>
            <person name="Brown D."/>
            <person name="Chillingworth T."/>
            <person name="Connor R."/>
            <person name="Davies R.M."/>
            <person name="Devlin K."/>
            <person name="Feltwell T."/>
            <person name="Gentles S."/>
            <person name="Hamlin N."/>
            <person name="Holroyd S."/>
            <person name="Hornsby T."/>
            <person name="Jagels K."/>
            <person name="Krogh A."/>
            <person name="McLean J."/>
            <person name="Moule S."/>
            <person name="Murphy L.D."/>
            <person name="Oliver S."/>
            <person name="Osborne J."/>
            <person name="Quail M.A."/>
            <person name="Rajandream M.A."/>
            <person name="Rogers J."/>
            <person name="Rutter S."/>
            <person name="Seeger K."/>
            <person name="Skelton S."/>
            <person name="Squares S."/>
            <person name="Squares R."/>
            <person name="Sulston J.E."/>
            <person name="Taylor K."/>
            <person name="Whitehead S."/>
            <person name="Barrell B.G."/>
        </authorList>
    </citation>
    <scope>NUCLEOTIDE SEQUENCE [LARGE SCALE GENOMIC DNA]</scope>
    <source>
        <strain evidence="6">ATCC 25618 / H37Rv</strain>
    </source>
</reference>
<reference key="2">
    <citation type="journal article" date="2011" name="Mol. Cell. Proteomics">
        <title>Proteogenomic analysis of Mycobacterium tuberculosis by high resolution mass spectrometry.</title>
        <authorList>
            <person name="Kelkar D.S."/>
            <person name="Kumar D."/>
            <person name="Kumar P."/>
            <person name="Balakrishnan L."/>
            <person name="Muthusamy B."/>
            <person name="Yadav A.K."/>
            <person name="Shrivastava P."/>
            <person name="Marimuthu A."/>
            <person name="Anand S."/>
            <person name="Sundaram H."/>
            <person name="Kingsbury R."/>
            <person name="Harsha H.C."/>
            <person name="Nair B."/>
            <person name="Prasad T.S."/>
            <person name="Chauhan D.S."/>
            <person name="Katoch K."/>
            <person name="Katoch V.M."/>
            <person name="Kumar P."/>
            <person name="Chaerkady R."/>
            <person name="Ramachandran S."/>
            <person name="Dash D."/>
            <person name="Pandey A."/>
        </authorList>
    </citation>
    <scope>IDENTIFICATION BY MASS SPECTROMETRY [LARGE SCALE ANALYSIS]</scope>
</reference>
<reference key="3">
    <citation type="journal article" date="2015" name="Nat. Commun.">
        <title>A novel pathway producing dimethylsulphide in bacteria is widespread in soil environments.</title>
        <authorList>
            <person name="Carrion O."/>
            <person name="Curson A.R."/>
            <person name="Kumaresan D."/>
            <person name="Fu Y."/>
            <person name="Lang A.S."/>
            <person name="Mercade E."/>
            <person name="Todd J.D."/>
        </authorList>
    </citation>
    <scope>FUNCTION</scope>
    <scope>CATALYTIC ACTIVITY</scope>
    <source>
        <strain>H37Rv</strain>
    </source>
</reference>